<accession>P03289</accession>
<organismHost>
    <name type="scientific">Homo sapiens</name>
    <name type="common">Human</name>
    <dbReference type="NCBI Taxonomy" id="9606"/>
</organismHost>
<organism>
    <name type="scientific">Human adenovirus C serotype 2</name>
    <name type="common">HAdV-2</name>
    <name type="synonym">Human adenovirus 2</name>
    <dbReference type="NCBI Taxonomy" id="10515"/>
    <lineage>
        <taxon>Viruses</taxon>
        <taxon>Varidnaviria</taxon>
        <taxon>Bamfordvirae</taxon>
        <taxon>Preplasmiviricota</taxon>
        <taxon>Tectiliviricetes</taxon>
        <taxon>Rowavirales</taxon>
        <taxon>Adenoviridae</taxon>
        <taxon>Mastadenovirus</taxon>
        <taxon>Human mastadenovirus C</taxon>
    </lineage>
</organism>
<name>Y112_ADE02</name>
<keyword id="KW-1185">Reference proteome</keyword>
<sequence>MLPYISWNTQRAPLRLRHLRHVRLRAHPPHAMGSPTQPIRARACRPRMAAGARLARMQDRLLRRAPAARGLYRGRRPPGRDAARPTTAILFAQGRPPLLDQRAPTRRGSHQR</sequence>
<proteinExistence type="predicted"/>
<protein>
    <recommendedName>
        <fullName>Uncharacterized protein F-112</fullName>
    </recommendedName>
</protein>
<reference key="1">
    <citation type="journal article" date="1982" name="J. Biol. Chem.">
        <title>Nucleotide sequences from the adenovirus-2 genome.</title>
        <authorList>
            <person name="Gingeras T.R."/>
            <person name="Sciaky D."/>
            <person name="Gelinas R.E."/>
            <person name="Bing-Dong J."/>
            <person name="Yen C.E."/>
            <person name="Kelly M.M."/>
            <person name="Bullock P.A."/>
            <person name="Parsons B.L."/>
            <person name="O'Neill K.E."/>
            <person name="Roberts R.J."/>
        </authorList>
    </citation>
    <scope>NUCLEOTIDE SEQUENCE [GENOMIC DNA]</scope>
</reference>
<reference key="2">
    <citation type="journal article" date="1982" name="J. Biol. Chem.">
        <title>DNA sequence analysis of the region encoding the terminal protein and the hypothetical N-gene product of adenovirus type 2.</title>
        <authorList>
            <person name="Alestroem P."/>
            <person name="Akusjaervi G."/>
            <person name="Pettersson M."/>
            <person name="Pettersson U."/>
        </authorList>
    </citation>
    <scope>NUCLEOTIDE SEQUENCE [GENOMIC DNA]</scope>
</reference>
<dbReference type="EMBL" id="J01917">
    <property type="status" value="NOT_ANNOTATED_CDS"/>
    <property type="molecule type" value="Genomic_DNA"/>
</dbReference>
<dbReference type="PIR" id="G92351">
    <property type="entry name" value="A03861"/>
</dbReference>
<dbReference type="Proteomes" id="UP000008167">
    <property type="component" value="Segment"/>
</dbReference>
<evidence type="ECO:0000256" key="1">
    <source>
        <dbReference type="SAM" id="MobiDB-lite"/>
    </source>
</evidence>
<feature type="chain" id="PRO_0000221916" description="Uncharacterized protein F-112">
    <location>
        <begin position="1"/>
        <end position="112"/>
    </location>
</feature>
<feature type="region of interest" description="Disordered" evidence="1">
    <location>
        <begin position="70"/>
        <end position="112"/>
    </location>
</feature>